<gene>
    <name evidence="1" type="primary">ndhH</name>
    <name type="ordered locus">P9303_27241</name>
</gene>
<sequence length="394" mass="45104">MSQLETRTEPMVVNFGPHHPSMHGVLRLVVTLDGEDVVDCEPVIGYLHRGMEKIAENRTSVMFVPYVSRMDYAAGMFYEAIVVNAPERLANISVPKRASYIRVVMLELNRIANHLLWLGPFLADVGAQTPFFYIFREREMIYDLWEAATGQRLINNNYFRIGGVACDLPWGWLEKCQDFCDWFGPKIDEYEKLITNNPIFRRRIEGLGAIGRDEAINWSLSGPMLRASGVPWDLRKVDHYECYDDFDWDVAWEKEGDCYARYRVRIEEMRQSLKILRQACEMIPGGPTENLEAQRMAEGKKSPFTGFDYQYVSKKVAPTFKIPNGELYTRLESGKGEIGVFLQGNNDVTPWRFKIRAADLNNLQILPHILKGAKVADIMAILGSIDVIMGSVDR</sequence>
<reference key="1">
    <citation type="journal article" date="2007" name="PLoS Genet.">
        <title>Patterns and implications of gene gain and loss in the evolution of Prochlorococcus.</title>
        <authorList>
            <person name="Kettler G.C."/>
            <person name="Martiny A.C."/>
            <person name="Huang K."/>
            <person name="Zucker J."/>
            <person name="Coleman M.L."/>
            <person name="Rodrigue S."/>
            <person name="Chen F."/>
            <person name="Lapidus A."/>
            <person name="Ferriera S."/>
            <person name="Johnson J."/>
            <person name="Steglich C."/>
            <person name="Church G.M."/>
            <person name="Richardson P."/>
            <person name="Chisholm S.W."/>
        </authorList>
    </citation>
    <scope>NUCLEOTIDE SEQUENCE [LARGE SCALE GENOMIC DNA]</scope>
    <source>
        <strain>MIT 9303</strain>
    </source>
</reference>
<keyword id="KW-0472">Membrane</keyword>
<keyword id="KW-0520">NAD</keyword>
<keyword id="KW-0521">NADP</keyword>
<keyword id="KW-0618">Plastoquinone</keyword>
<keyword id="KW-0874">Quinone</keyword>
<keyword id="KW-0793">Thylakoid</keyword>
<keyword id="KW-1278">Translocase</keyword>
<keyword id="KW-0813">Transport</keyword>
<comment type="function">
    <text evidence="1">NDH-1 shuttles electrons from an unknown electron donor, via FMN and iron-sulfur (Fe-S) centers, to quinones in the respiratory and/or the photosynthetic chain. The immediate electron acceptor for the enzyme in this species is believed to be plastoquinone. Couples the redox reaction to proton translocation, and thus conserves the redox energy in a proton gradient. Cyanobacterial NDH-1 also plays a role in inorganic carbon-concentration.</text>
</comment>
<comment type="catalytic activity">
    <reaction evidence="1">
        <text>a plastoquinone + NADH + (n+1) H(+)(in) = a plastoquinol + NAD(+) + n H(+)(out)</text>
        <dbReference type="Rhea" id="RHEA:42608"/>
        <dbReference type="Rhea" id="RHEA-COMP:9561"/>
        <dbReference type="Rhea" id="RHEA-COMP:9562"/>
        <dbReference type="ChEBI" id="CHEBI:15378"/>
        <dbReference type="ChEBI" id="CHEBI:17757"/>
        <dbReference type="ChEBI" id="CHEBI:57540"/>
        <dbReference type="ChEBI" id="CHEBI:57945"/>
        <dbReference type="ChEBI" id="CHEBI:62192"/>
    </reaction>
</comment>
<comment type="catalytic activity">
    <reaction evidence="1">
        <text>a plastoquinone + NADPH + (n+1) H(+)(in) = a plastoquinol + NADP(+) + n H(+)(out)</text>
        <dbReference type="Rhea" id="RHEA:42612"/>
        <dbReference type="Rhea" id="RHEA-COMP:9561"/>
        <dbReference type="Rhea" id="RHEA-COMP:9562"/>
        <dbReference type="ChEBI" id="CHEBI:15378"/>
        <dbReference type="ChEBI" id="CHEBI:17757"/>
        <dbReference type="ChEBI" id="CHEBI:57783"/>
        <dbReference type="ChEBI" id="CHEBI:58349"/>
        <dbReference type="ChEBI" id="CHEBI:62192"/>
    </reaction>
</comment>
<comment type="subunit">
    <text evidence="1">NDH-1 can be composed of about 15 different subunits; different subcomplexes with different compositions have been identified which probably have different functions.</text>
</comment>
<comment type="subcellular location">
    <subcellularLocation>
        <location evidence="1">Cellular thylakoid membrane</location>
        <topology evidence="1">Peripheral membrane protein</topology>
        <orientation evidence="1">Cytoplasmic side</orientation>
    </subcellularLocation>
</comment>
<comment type="similarity">
    <text evidence="1">Belongs to the complex I 49 kDa subunit family.</text>
</comment>
<accession>A2CD94</accession>
<feature type="chain" id="PRO_0000371910" description="NAD(P)H-quinone oxidoreductase subunit H">
    <location>
        <begin position="1"/>
        <end position="394"/>
    </location>
</feature>
<name>NDHH_PROM3</name>
<proteinExistence type="inferred from homology"/>
<organism>
    <name type="scientific">Prochlorococcus marinus (strain MIT 9303)</name>
    <dbReference type="NCBI Taxonomy" id="59922"/>
    <lineage>
        <taxon>Bacteria</taxon>
        <taxon>Bacillati</taxon>
        <taxon>Cyanobacteriota</taxon>
        <taxon>Cyanophyceae</taxon>
        <taxon>Synechococcales</taxon>
        <taxon>Prochlorococcaceae</taxon>
        <taxon>Prochlorococcus</taxon>
    </lineage>
</organism>
<evidence type="ECO:0000255" key="1">
    <source>
        <dbReference type="HAMAP-Rule" id="MF_01358"/>
    </source>
</evidence>
<dbReference type="EC" id="7.1.1.-" evidence="1"/>
<dbReference type="EMBL" id="CP000554">
    <property type="protein sequence ID" value="ABM79454.1"/>
    <property type="molecule type" value="Genomic_DNA"/>
</dbReference>
<dbReference type="RefSeq" id="WP_011827297.1">
    <property type="nucleotide sequence ID" value="NC_008820.1"/>
</dbReference>
<dbReference type="SMR" id="A2CD94"/>
<dbReference type="STRING" id="59922.P9303_27241"/>
<dbReference type="KEGG" id="pmf:P9303_27241"/>
<dbReference type="HOGENOM" id="CLU_015134_1_2_3"/>
<dbReference type="BioCyc" id="PMAR59922:G1G80-2390-MONOMER"/>
<dbReference type="Proteomes" id="UP000002274">
    <property type="component" value="Chromosome"/>
</dbReference>
<dbReference type="GO" id="GO:0031676">
    <property type="term" value="C:plasma membrane-derived thylakoid membrane"/>
    <property type="evidence" value="ECO:0007669"/>
    <property type="project" value="UniProtKB-SubCell"/>
</dbReference>
<dbReference type="GO" id="GO:0051287">
    <property type="term" value="F:NAD binding"/>
    <property type="evidence" value="ECO:0007669"/>
    <property type="project" value="InterPro"/>
</dbReference>
<dbReference type="GO" id="GO:0016655">
    <property type="term" value="F:oxidoreductase activity, acting on NAD(P)H, quinone or similar compound as acceptor"/>
    <property type="evidence" value="ECO:0007669"/>
    <property type="project" value="UniProtKB-UniRule"/>
</dbReference>
<dbReference type="GO" id="GO:0048038">
    <property type="term" value="F:quinone binding"/>
    <property type="evidence" value="ECO:0007669"/>
    <property type="project" value="UniProtKB-KW"/>
</dbReference>
<dbReference type="GO" id="GO:0019684">
    <property type="term" value="P:photosynthesis, light reaction"/>
    <property type="evidence" value="ECO:0007669"/>
    <property type="project" value="UniProtKB-UniRule"/>
</dbReference>
<dbReference type="Gene3D" id="1.10.645.10">
    <property type="entry name" value="Cytochrome-c3 Hydrogenase, chain B"/>
    <property type="match status" value="1"/>
</dbReference>
<dbReference type="HAMAP" id="MF_01358">
    <property type="entry name" value="NDH1_NuoD"/>
    <property type="match status" value="1"/>
</dbReference>
<dbReference type="InterPro" id="IPR001135">
    <property type="entry name" value="NADH_Q_OxRdtase_suD"/>
</dbReference>
<dbReference type="InterPro" id="IPR014029">
    <property type="entry name" value="NADH_UbQ_OxRdtase_49kDa_CS"/>
</dbReference>
<dbReference type="InterPro" id="IPR022885">
    <property type="entry name" value="NDH1_su_D/H"/>
</dbReference>
<dbReference type="InterPro" id="IPR029014">
    <property type="entry name" value="NiFe-Hase_large"/>
</dbReference>
<dbReference type="NCBIfam" id="NF004739">
    <property type="entry name" value="PRK06075.1"/>
    <property type="match status" value="1"/>
</dbReference>
<dbReference type="NCBIfam" id="NF005649">
    <property type="entry name" value="PRK07415.1"/>
    <property type="match status" value="1"/>
</dbReference>
<dbReference type="PANTHER" id="PTHR11993:SF10">
    <property type="entry name" value="NADH DEHYDROGENASE [UBIQUINONE] IRON-SULFUR PROTEIN 2, MITOCHONDRIAL"/>
    <property type="match status" value="1"/>
</dbReference>
<dbReference type="PANTHER" id="PTHR11993">
    <property type="entry name" value="NADH-UBIQUINONE OXIDOREDUCTASE 49 KDA SUBUNIT"/>
    <property type="match status" value="1"/>
</dbReference>
<dbReference type="Pfam" id="PF00346">
    <property type="entry name" value="Complex1_49kDa"/>
    <property type="match status" value="1"/>
</dbReference>
<dbReference type="SUPFAM" id="SSF56762">
    <property type="entry name" value="HydB/Nqo4-like"/>
    <property type="match status" value="1"/>
</dbReference>
<dbReference type="PROSITE" id="PS00535">
    <property type="entry name" value="COMPLEX1_49K"/>
    <property type="match status" value="1"/>
</dbReference>
<protein>
    <recommendedName>
        <fullName evidence="1">NAD(P)H-quinone oxidoreductase subunit H</fullName>
        <ecNumber evidence="1">7.1.1.-</ecNumber>
    </recommendedName>
    <alternativeName>
        <fullName>NAD(P)H dehydrogenase subunit H</fullName>
    </alternativeName>
    <alternativeName>
        <fullName evidence="1">NADH-plastoquinone oxidoreductase subunit H</fullName>
    </alternativeName>
    <alternativeName>
        <fullName evidence="1">NDH-1 subunit H</fullName>
        <shortName evidence="1">NDH-H</shortName>
    </alternativeName>
</protein>